<organism>
    <name type="scientific">Oncorhynchus mykiss</name>
    <name type="common">Rainbow trout</name>
    <name type="synonym">Salmo gairdneri</name>
    <dbReference type="NCBI Taxonomy" id="8022"/>
    <lineage>
        <taxon>Eukaryota</taxon>
        <taxon>Metazoa</taxon>
        <taxon>Chordata</taxon>
        <taxon>Craniata</taxon>
        <taxon>Vertebrata</taxon>
        <taxon>Euteleostomi</taxon>
        <taxon>Actinopterygii</taxon>
        <taxon>Neopterygii</taxon>
        <taxon>Teleostei</taxon>
        <taxon>Protacanthopterygii</taxon>
        <taxon>Salmoniformes</taxon>
        <taxon>Salmonidae</taxon>
        <taxon>Salmoninae</taxon>
        <taxon>Oncorhynchus</taxon>
    </lineage>
</organism>
<reference key="1">
    <citation type="journal article" date="2008" name="FEBS J.">
        <title>Identification of a novel matrix protein contained in a protein aggregate associated with collagen in fish otoliths.</title>
        <authorList>
            <person name="Tohse H."/>
            <person name="Takagi Y."/>
            <person name="Nagasawa H."/>
        </authorList>
    </citation>
    <scope>NUCLEOTIDE SEQUENCE [MRNA]</scope>
    <scope>SUBCELLULAR LOCATION</scope>
    <scope>INTERACTION WITH OTOL1</scope>
    <scope>CALCIUM-BINDING</scope>
    <scope>TISSUE SPECIFICITY</scope>
</reference>
<reference key="2">
    <citation type="journal article" date="2014" name="Nat. Commun.">
        <title>The rainbow trout genome provides novel insights into evolution after whole-genome duplication in vertebrates.</title>
        <authorList>
            <person name="Berthelot C."/>
            <person name="Brunet F."/>
            <person name="Chalopin D."/>
            <person name="Juanchich A."/>
            <person name="Bernard M."/>
            <person name="Noel B."/>
            <person name="Bento P."/>
            <person name="Da Silva C."/>
            <person name="Labadie K."/>
            <person name="Alberti A."/>
            <person name="Aury J.M."/>
            <person name="Louis A."/>
            <person name="Dehais P."/>
            <person name="Bardou P."/>
            <person name="Montfort J."/>
            <person name="Klopp C."/>
            <person name="Cabau C."/>
            <person name="Gaspin C."/>
            <person name="Thorgaard G.H."/>
            <person name="Boussaha M."/>
            <person name="Quillet E."/>
            <person name="Guyomard R."/>
            <person name="Galiana D."/>
            <person name="Bobe J."/>
            <person name="Volff J.N."/>
            <person name="Genet C."/>
            <person name="Wincker P."/>
            <person name="Jaillon O."/>
            <person name="Roest Crollius H."/>
            <person name="Guiguen Y."/>
        </authorList>
    </citation>
    <scope>NUCLEOTIDE SEQUENCE [LARGE SCALE GENOMIC DNA]</scope>
</reference>
<reference key="3">
    <citation type="journal article" date="2017" name="Biochim. Biophys. Acta">
        <title>Structural properties of the intrinsically disordered, multiple calcium ion-binding otolith matrix macromolecule-64 (OMM-64).</title>
        <authorList>
            <person name="Poznar M."/>
            <person name="Holubowicz R."/>
            <person name="Wojtas M."/>
            <person name="Gapinski J."/>
            <person name="Banachowicz E."/>
            <person name="Patkowski A."/>
            <person name="Ozyhar A."/>
            <person name="Dobryszycki P."/>
        </authorList>
    </citation>
    <scope>FUNCTION</scope>
</reference>
<dbReference type="EMBL" id="AB213022">
    <property type="protein sequence ID" value="BAG14384.1"/>
    <property type="molecule type" value="mRNA"/>
</dbReference>
<dbReference type="EMBL" id="FR905797">
    <property type="protein sequence ID" value="CDQ81607.1"/>
    <property type="molecule type" value="Genomic_DNA"/>
</dbReference>
<dbReference type="STRING" id="8022.A0A060XQP6"/>
<dbReference type="PaxDb" id="8022-A0A060XQP6"/>
<dbReference type="KEGG" id="omy:100170213"/>
<dbReference type="OrthoDB" id="8954469at2759"/>
<dbReference type="Proteomes" id="UP000193380">
    <property type="component" value="Unassembled WGS sequence"/>
</dbReference>
<dbReference type="Proteomes" id="UP000694395">
    <property type="component" value="Unplaced"/>
</dbReference>
<dbReference type="GO" id="GO:0005576">
    <property type="term" value="C:extracellular region"/>
    <property type="evidence" value="ECO:0007669"/>
    <property type="project" value="UniProtKB-KW"/>
</dbReference>
<protein>
    <recommendedName>
        <fullName evidence="7">Otolith matrix protein OMM-64</fullName>
    </recommendedName>
    <alternativeName>
        <fullName evidence="6">Otolith matrix macromolecule-64</fullName>
        <shortName evidence="6">OMM-64</shortName>
    </alternativeName>
</protein>
<gene>
    <name type="ORF">GSONMT00017137001</name>
</gene>
<proteinExistence type="evidence at protein level"/>
<name>OMM64_ONCMY</name>
<sequence>MLSRLLIVPLIFALAGLAISAPVNDGTEADNDERAASLLVHLKGDKDGGGLTGSPDGVSAGTTDGTDSSKELAGGAVDSSPDTTDTPDASSSDIFPDTNNRDTSVETTGNPDDSDAPDAAESAGSQDTTDAADASEAVAETVDTYDIPDTDGADDREKVSTEVSTEDLDSAGVDKSPESDSTESPGSDSAESPGSDSAESPGSDSTESPGSDSTESPRSDSTDEVLTDVQADSADVTSDDMDEATETDKDDDKSDDKSDADAATDKDDSDEDKDTELDGKAHAEDTQTEEAADSDSKQGAADSDSDTDDDRPEKDVKNDSDDSKDTTEDDKPDKDDKKNRDSADNSNDDSDEMIQVPREELEQQEINLKEGGVIGSQEETVASDMEEGSDVGDQKPGPEDSIEEGSPVGRQDFKHPQDSEEEELEKEAKKEKELEEAEEERTLKTIESDSQEDSVDESEAEPDSNSKKDIGTSDAPEPQEDDSEEDTDDSMMKEPKDSDDAESDKDDKDKNDMDKEDMDKDDMDKDDMDKDDMDKDDVDKDASDSVDDQSESDAEPGADSHTVVDEIDGEETMTPDSEEIMKSGEMDSVVEATEVPADILDQPDQQDDMTQGASQAADAAATALAAQS</sequence>
<keyword id="KW-0272">Extracellular matrix</keyword>
<keyword id="KW-0325">Glycoprotein</keyword>
<keyword id="KW-1185">Reference proteome</keyword>
<keyword id="KW-0964">Secreted</keyword>
<keyword id="KW-0732">Signal</keyword>
<accession>A0A060XQP6</accession>
<accession>B1Q2L9</accession>
<comment type="function">
    <text evidence="4 5">Calcium-binding component of otoliths, a calcium carbonate structure of the inner ear involved in hearing and balance sensing (PubMed:18410381). Binds calcium (PubMed:18410381, PubMed:28866388).</text>
</comment>
<comment type="subcellular location">
    <subcellularLocation>
        <location evidence="4">Secreted</location>
        <location evidence="4">Extracellular space</location>
        <location evidence="4">Extracellular matrix</location>
    </subcellularLocation>
    <text evidence="4">Accumulates in the ring-like structures of otoliths.</text>
</comment>
<comment type="tissue specificity">
    <text evidence="4">Specifically expressed in otolith matrix-producing cells.</text>
</comment>
<comment type="domain">
    <text evidence="4">The Asp/Glu-rich (acidic) region mediates binding to calcium.</text>
</comment>
<evidence type="ECO:0000255" key="1"/>
<evidence type="ECO:0000255" key="2">
    <source>
        <dbReference type="PROSITE-ProRule" id="PRU00498"/>
    </source>
</evidence>
<evidence type="ECO:0000256" key="3">
    <source>
        <dbReference type="SAM" id="MobiDB-lite"/>
    </source>
</evidence>
<evidence type="ECO:0000269" key="4">
    <source>
    </source>
</evidence>
<evidence type="ECO:0000269" key="5">
    <source>
    </source>
</evidence>
<evidence type="ECO:0000303" key="6">
    <source>
    </source>
</evidence>
<evidence type="ECO:0000305" key="7"/>
<feature type="signal peptide" evidence="1">
    <location>
        <begin position="1"/>
        <end position="20"/>
    </location>
</feature>
<feature type="chain" id="PRO_5001591264" description="Otolith matrix protein OMM-64" evidence="1">
    <location>
        <begin position="21"/>
        <end position="628"/>
    </location>
</feature>
<feature type="region of interest" description="Disordered" evidence="3">
    <location>
        <begin position="43"/>
        <end position="628"/>
    </location>
</feature>
<feature type="compositionally biased region" description="Low complexity" evidence="3">
    <location>
        <begin position="78"/>
        <end position="93"/>
    </location>
</feature>
<feature type="compositionally biased region" description="Polar residues" evidence="3">
    <location>
        <begin position="182"/>
        <end position="214"/>
    </location>
</feature>
<feature type="compositionally biased region" description="Basic and acidic residues" evidence="3">
    <location>
        <begin position="246"/>
        <end position="266"/>
    </location>
</feature>
<feature type="compositionally biased region" description="Basic and acidic residues" evidence="3">
    <location>
        <begin position="276"/>
        <end position="285"/>
    </location>
</feature>
<feature type="compositionally biased region" description="Basic and acidic residues" evidence="3">
    <location>
        <begin position="311"/>
        <end position="343"/>
    </location>
</feature>
<feature type="compositionally biased region" description="Acidic residues" evidence="3">
    <location>
        <begin position="449"/>
        <end position="462"/>
    </location>
</feature>
<feature type="compositionally biased region" description="Acidic residues" evidence="3">
    <location>
        <begin position="477"/>
        <end position="489"/>
    </location>
</feature>
<feature type="compositionally biased region" description="Acidic residues" evidence="3">
    <location>
        <begin position="514"/>
        <end position="536"/>
    </location>
</feature>
<feature type="compositionally biased region" description="Acidic residues" evidence="3">
    <location>
        <begin position="544"/>
        <end position="556"/>
    </location>
</feature>
<feature type="compositionally biased region" description="Acidic residues" evidence="3">
    <location>
        <begin position="565"/>
        <end position="578"/>
    </location>
</feature>
<feature type="compositionally biased region" description="Low complexity" evidence="3">
    <location>
        <begin position="613"/>
        <end position="628"/>
    </location>
</feature>
<feature type="glycosylation site" description="N-linked (GlcNAc...) asparagine" evidence="2">
    <location>
        <position position="318"/>
    </location>
</feature>
<feature type="sequence conflict" description="In Ref. 1; BAG14384." evidence="7" ref="1">
    <original>G</original>
    <variation>A</variation>
    <location>
        <position position="44"/>
    </location>
</feature>
<feature type="sequence conflict" description="In Ref. 1; BAG14384." evidence="7" ref="1">
    <original>E</original>
    <variation>K</variation>
    <location>
        <position position="166"/>
    </location>
</feature>
<feature type="sequence conflict" description="In Ref. 1; BAG14384." evidence="7" ref="1">
    <original>K</original>
    <variation>E</variation>
    <location>
        <position position="369"/>
    </location>
</feature>